<sequence>MPFMKGREPIRRTLKYLNAGKLVLKDKVRIFSVNYNTYGAHHAGARDFVFWNIPQIQFKNPEVQVLTLKNMTPSPFVRCYFDDGRDMLIDLDSRNRNDIIDHLVKVVGKTREQLDAEERLKESKDNPANFGYGCGRHCICEIPGQVPCPGTVPLPDHMRGKILFAPK</sequence>
<dbReference type="EMBL" id="AE014298">
    <property type="protein sequence ID" value="AAF48377.1"/>
    <property type="molecule type" value="Genomic_DNA"/>
</dbReference>
<dbReference type="EMBL" id="BT024442">
    <property type="protein sequence ID" value="ABC86504.1"/>
    <property type="molecule type" value="mRNA"/>
</dbReference>
<dbReference type="EMBL" id="BT029396">
    <property type="protein sequence ID" value="ABK56982.1"/>
    <property type="molecule type" value="mRNA"/>
</dbReference>
<dbReference type="RefSeq" id="NP_511153.1">
    <property type="nucleotide sequence ID" value="NM_078598.2"/>
</dbReference>
<dbReference type="SMR" id="Q9VY28"/>
<dbReference type="BioGRID" id="58756">
    <property type="interactions" value="3"/>
</dbReference>
<dbReference type="FunCoup" id="Q9VY28">
    <property type="interactions" value="1155"/>
</dbReference>
<dbReference type="IntAct" id="Q9VY28">
    <property type="interactions" value="40"/>
</dbReference>
<dbReference type="STRING" id="7227.FBpp0073762"/>
<dbReference type="PaxDb" id="7227-FBpp0073762"/>
<dbReference type="DNASU" id="32395"/>
<dbReference type="EnsemblMetazoa" id="FBtr0073945">
    <property type="protein sequence ID" value="FBpp0073762"/>
    <property type="gene ID" value="FBgn0030572"/>
</dbReference>
<dbReference type="GeneID" id="32395"/>
<dbReference type="KEGG" id="dme:Dmel_CG14413"/>
<dbReference type="AGR" id="FB:FBgn0030572"/>
<dbReference type="CTD" id="64432"/>
<dbReference type="FlyBase" id="FBgn0030572">
    <property type="gene designation" value="mRpS25"/>
</dbReference>
<dbReference type="VEuPathDB" id="VectorBase:FBgn0030572"/>
<dbReference type="eggNOG" id="KOG4079">
    <property type="taxonomic scope" value="Eukaryota"/>
</dbReference>
<dbReference type="GeneTree" id="ENSGT00640000091558"/>
<dbReference type="HOGENOM" id="CLU_094727_0_0_1"/>
<dbReference type="InParanoid" id="Q9VY28"/>
<dbReference type="OMA" id="DHKQISQ"/>
<dbReference type="OrthoDB" id="5919182at2759"/>
<dbReference type="PhylomeDB" id="Q9VY28"/>
<dbReference type="Reactome" id="R-DME-5389840">
    <property type="pathway name" value="Mitochondrial translation elongation"/>
</dbReference>
<dbReference type="Reactome" id="R-DME-5419276">
    <property type="pathway name" value="Mitochondrial translation termination"/>
</dbReference>
<dbReference type="BioGRID-ORCS" id="32395">
    <property type="hits" value="1 hit in 1 CRISPR screen"/>
</dbReference>
<dbReference type="GenomeRNAi" id="32395"/>
<dbReference type="PRO" id="PR:Q9VY28"/>
<dbReference type="Proteomes" id="UP000000803">
    <property type="component" value="Chromosome X"/>
</dbReference>
<dbReference type="Bgee" id="FBgn0030572">
    <property type="expression patterns" value="Expressed in adult class III enteroendocrine cell in adult midgut (Drosophila) and 117 other cell types or tissues"/>
</dbReference>
<dbReference type="GO" id="GO:0005763">
    <property type="term" value="C:mitochondrial small ribosomal subunit"/>
    <property type="evidence" value="ECO:0000250"/>
    <property type="project" value="UniProtKB"/>
</dbReference>
<dbReference type="GO" id="GO:0005739">
    <property type="term" value="C:mitochondrion"/>
    <property type="evidence" value="ECO:0000318"/>
    <property type="project" value="GO_Central"/>
</dbReference>
<dbReference type="GO" id="GO:0003735">
    <property type="term" value="F:structural constituent of ribosome"/>
    <property type="evidence" value="ECO:0000318"/>
    <property type="project" value="GO_Central"/>
</dbReference>
<dbReference type="GO" id="GO:0032543">
    <property type="term" value="P:mitochondrial translation"/>
    <property type="evidence" value="ECO:0000304"/>
    <property type="project" value="FlyBase"/>
</dbReference>
<dbReference type="FunFam" id="3.40.30.10:FF:000247">
    <property type="entry name" value="28S ribosomal protein S25, mitochondrial"/>
    <property type="match status" value="1"/>
</dbReference>
<dbReference type="Gene3D" id="3.40.30.10">
    <property type="entry name" value="Glutaredoxin"/>
    <property type="match status" value="1"/>
</dbReference>
<dbReference type="InterPro" id="IPR007741">
    <property type="entry name" value="Ribosomal_mL43/mS25/NADH_DH"/>
</dbReference>
<dbReference type="InterPro" id="IPR040049">
    <property type="entry name" value="Ribosomal_mS25/mL61"/>
</dbReference>
<dbReference type="InterPro" id="IPR036249">
    <property type="entry name" value="Thioredoxin-like_sf"/>
</dbReference>
<dbReference type="PANTHER" id="PTHR13274">
    <property type="entry name" value="MITOCHONDRIAL RIBOSOMAL PROTEIN S25"/>
    <property type="match status" value="1"/>
</dbReference>
<dbReference type="PANTHER" id="PTHR13274:SF2">
    <property type="entry name" value="SMALL RIBOSOMAL SUBUNIT PROTEIN MS25"/>
    <property type="match status" value="1"/>
</dbReference>
<dbReference type="Pfam" id="PF05047">
    <property type="entry name" value="L51_S25_CI-B8"/>
    <property type="match status" value="1"/>
</dbReference>
<dbReference type="SMART" id="SM00916">
    <property type="entry name" value="L51_S25_CI-B8"/>
    <property type="match status" value="1"/>
</dbReference>
<dbReference type="SUPFAM" id="SSF52833">
    <property type="entry name" value="Thioredoxin-like"/>
    <property type="match status" value="1"/>
</dbReference>
<reference key="1">
    <citation type="journal article" date="2000" name="Science">
        <title>The genome sequence of Drosophila melanogaster.</title>
        <authorList>
            <person name="Adams M.D."/>
            <person name="Celniker S.E."/>
            <person name="Holt R.A."/>
            <person name="Evans C.A."/>
            <person name="Gocayne J.D."/>
            <person name="Amanatides P.G."/>
            <person name="Scherer S.E."/>
            <person name="Li P.W."/>
            <person name="Hoskins R.A."/>
            <person name="Galle R.F."/>
            <person name="George R.A."/>
            <person name="Lewis S.E."/>
            <person name="Richards S."/>
            <person name="Ashburner M."/>
            <person name="Henderson S.N."/>
            <person name="Sutton G.G."/>
            <person name="Wortman J.R."/>
            <person name="Yandell M.D."/>
            <person name="Zhang Q."/>
            <person name="Chen L.X."/>
            <person name="Brandon R.C."/>
            <person name="Rogers Y.-H.C."/>
            <person name="Blazej R.G."/>
            <person name="Champe M."/>
            <person name="Pfeiffer B.D."/>
            <person name="Wan K.H."/>
            <person name="Doyle C."/>
            <person name="Baxter E.G."/>
            <person name="Helt G."/>
            <person name="Nelson C.R."/>
            <person name="Miklos G.L.G."/>
            <person name="Abril J.F."/>
            <person name="Agbayani A."/>
            <person name="An H.-J."/>
            <person name="Andrews-Pfannkoch C."/>
            <person name="Baldwin D."/>
            <person name="Ballew R.M."/>
            <person name="Basu A."/>
            <person name="Baxendale J."/>
            <person name="Bayraktaroglu L."/>
            <person name="Beasley E.M."/>
            <person name="Beeson K.Y."/>
            <person name="Benos P.V."/>
            <person name="Berman B.P."/>
            <person name="Bhandari D."/>
            <person name="Bolshakov S."/>
            <person name="Borkova D."/>
            <person name="Botchan M.R."/>
            <person name="Bouck J."/>
            <person name="Brokstein P."/>
            <person name="Brottier P."/>
            <person name="Burtis K.C."/>
            <person name="Busam D.A."/>
            <person name="Butler H."/>
            <person name="Cadieu E."/>
            <person name="Center A."/>
            <person name="Chandra I."/>
            <person name="Cherry J.M."/>
            <person name="Cawley S."/>
            <person name="Dahlke C."/>
            <person name="Davenport L.B."/>
            <person name="Davies P."/>
            <person name="de Pablos B."/>
            <person name="Delcher A."/>
            <person name="Deng Z."/>
            <person name="Mays A.D."/>
            <person name="Dew I."/>
            <person name="Dietz S.M."/>
            <person name="Dodson K."/>
            <person name="Doup L.E."/>
            <person name="Downes M."/>
            <person name="Dugan-Rocha S."/>
            <person name="Dunkov B.C."/>
            <person name="Dunn P."/>
            <person name="Durbin K.J."/>
            <person name="Evangelista C.C."/>
            <person name="Ferraz C."/>
            <person name="Ferriera S."/>
            <person name="Fleischmann W."/>
            <person name="Fosler C."/>
            <person name="Gabrielian A.E."/>
            <person name="Garg N.S."/>
            <person name="Gelbart W.M."/>
            <person name="Glasser K."/>
            <person name="Glodek A."/>
            <person name="Gong F."/>
            <person name="Gorrell J.H."/>
            <person name="Gu Z."/>
            <person name="Guan P."/>
            <person name="Harris M."/>
            <person name="Harris N.L."/>
            <person name="Harvey D.A."/>
            <person name="Heiman T.J."/>
            <person name="Hernandez J.R."/>
            <person name="Houck J."/>
            <person name="Hostin D."/>
            <person name="Houston K.A."/>
            <person name="Howland T.J."/>
            <person name="Wei M.-H."/>
            <person name="Ibegwam C."/>
            <person name="Jalali M."/>
            <person name="Kalush F."/>
            <person name="Karpen G.H."/>
            <person name="Ke Z."/>
            <person name="Kennison J.A."/>
            <person name="Ketchum K.A."/>
            <person name="Kimmel B.E."/>
            <person name="Kodira C.D."/>
            <person name="Kraft C.L."/>
            <person name="Kravitz S."/>
            <person name="Kulp D."/>
            <person name="Lai Z."/>
            <person name="Lasko P."/>
            <person name="Lei Y."/>
            <person name="Levitsky A.A."/>
            <person name="Li J.H."/>
            <person name="Li Z."/>
            <person name="Liang Y."/>
            <person name="Lin X."/>
            <person name="Liu X."/>
            <person name="Mattei B."/>
            <person name="McIntosh T.C."/>
            <person name="McLeod M.P."/>
            <person name="McPherson D."/>
            <person name="Merkulov G."/>
            <person name="Milshina N.V."/>
            <person name="Mobarry C."/>
            <person name="Morris J."/>
            <person name="Moshrefi A."/>
            <person name="Mount S.M."/>
            <person name="Moy M."/>
            <person name="Murphy B."/>
            <person name="Murphy L."/>
            <person name="Muzny D.M."/>
            <person name="Nelson D.L."/>
            <person name="Nelson D.R."/>
            <person name="Nelson K.A."/>
            <person name="Nixon K."/>
            <person name="Nusskern D.R."/>
            <person name="Pacleb J.M."/>
            <person name="Palazzolo M."/>
            <person name="Pittman G.S."/>
            <person name="Pan S."/>
            <person name="Pollard J."/>
            <person name="Puri V."/>
            <person name="Reese M.G."/>
            <person name="Reinert K."/>
            <person name="Remington K."/>
            <person name="Saunders R.D.C."/>
            <person name="Scheeler F."/>
            <person name="Shen H."/>
            <person name="Shue B.C."/>
            <person name="Siden-Kiamos I."/>
            <person name="Simpson M."/>
            <person name="Skupski M.P."/>
            <person name="Smith T.J."/>
            <person name="Spier E."/>
            <person name="Spradling A.C."/>
            <person name="Stapleton M."/>
            <person name="Strong R."/>
            <person name="Sun E."/>
            <person name="Svirskas R."/>
            <person name="Tector C."/>
            <person name="Turner R."/>
            <person name="Venter E."/>
            <person name="Wang A.H."/>
            <person name="Wang X."/>
            <person name="Wang Z.-Y."/>
            <person name="Wassarman D.A."/>
            <person name="Weinstock G.M."/>
            <person name="Weissenbach J."/>
            <person name="Williams S.M."/>
            <person name="Woodage T."/>
            <person name="Worley K.C."/>
            <person name="Wu D."/>
            <person name="Yang S."/>
            <person name="Yao Q.A."/>
            <person name="Ye J."/>
            <person name="Yeh R.-F."/>
            <person name="Zaveri J.S."/>
            <person name="Zhan M."/>
            <person name="Zhang G."/>
            <person name="Zhao Q."/>
            <person name="Zheng L."/>
            <person name="Zheng X.H."/>
            <person name="Zhong F.N."/>
            <person name="Zhong W."/>
            <person name="Zhou X."/>
            <person name="Zhu S.C."/>
            <person name="Zhu X."/>
            <person name="Smith H.O."/>
            <person name="Gibbs R.A."/>
            <person name="Myers E.W."/>
            <person name="Rubin G.M."/>
            <person name="Venter J.C."/>
        </authorList>
    </citation>
    <scope>NUCLEOTIDE SEQUENCE [LARGE SCALE GENOMIC DNA]</scope>
    <source>
        <strain>Berkeley</strain>
    </source>
</reference>
<reference key="2">
    <citation type="journal article" date="2002" name="Genome Biol.">
        <title>Annotation of the Drosophila melanogaster euchromatic genome: a systematic review.</title>
        <authorList>
            <person name="Misra S."/>
            <person name="Crosby M.A."/>
            <person name="Mungall C.J."/>
            <person name="Matthews B.B."/>
            <person name="Campbell K.S."/>
            <person name="Hradecky P."/>
            <person name="Huang Y."/>
            <person name="Kaminker J.S."/>
            <person name="Millburn G.H."/>
            <person name="Prochnik S.E."/>
            <person name="Smith C.D."/>
            <person name="Tupy J.L."/>
            <person name="Whitfield E.J."/>
            <person name="Bayraktaroglu L."/>
            <person name="Berman B.P."/>
            <person name="Bettencourt B.R."/>
            <person name="Celniker S.E."/>
            <person name="de Grey A.D.N.J."/>
            <person name="Drysdale R.A."/>
            <person name="Harris N.L."/>
            <person name="Richter J."/>
            <person name="Russo S."/>
            <person name="Schroeder A.J."/>
            <person name="Shu S.Q."/>
            <person name="Stapleton M."/>
            <person name="Yamada C."/>
            <person name="Ashburner M."/>
            <person name="Gelbart W.M."/>
            <person name="Rubin G.M."/>
            <person name="Lewis S.E."/>
        </authorList>
    </citation>
    <scope>GENOME REANNOTATION</scope>
    <source>
        <strain>Berkeley</strain>
    </source>
</reference>
<reference key="3">
    <citation type="submission" date="2006-11" db="EMBL/GenBank/DDBJ databases">
        <authorList>
            <person name="Stapleton M."/>
            <person name="Carlson J.W."/>
            <person name="Chavez C."/>
            <person name="Frise E."/>
            <person name="George R.A."/>
            <person name="Kapadia B."/>
            <person name="Pacleb J.M."/>
            <person name="Park S."/>
            <person name="Wan K.H."/>
            <person name="Yu C."/>
            <person name="Celniker S.E."/>
        </authorList>
    </citation>
    <scope>NUCLEOTIDE SEQUENCE [LARGE SCALE MRNA]</scope>
    <source>
        <strain>Berkeley</strain>
    </source>
</reference>
<comment type="subunit">
    <text evidence="1">Component of the mitochondrial ribosome small subunit (28S) which comprises a 12S rRNA and about 30 distinct proteins.</text>
</comment>
<comment type="interaction">
    <interactant intactId="EBI-3429710">
        <id>Q9VY28</id>
    </interactant>
    <interactant intactId="EBI-3431675">
        <id>Q9NFP5</id>
        <label>Sh3beta</label>
    </interactant>
    <organismsDiffer>false</organismsDiffer>
    <experiments>2</experiments>
</comment>
<comment type="subcellular location">
    <subcellularLocation>
        <location evidence="1">Mitochondrion</location>
    </subcellularLocation>
</comment>
<comment type="similarity">
    <text evidence="2">Belongs to the mitochondrion-specific ribosomal protein mS25 family.</text>
</comment>
<keyword id="KW-0496">Mitochondrion</keyword>
<keyword id="KW-1185">Reference proteome</keyword>
<keyword id="KW-0687">Ribonucleoprotein</keyword>
<keyword id="KW-0689">Ribosomal protein</keyword>
<feature type="chain" id="PRO_0000087711" description="Small ribosomal subunit protein mS25">
    <location>
        <begin position="1"/>
        <end position="167"/>
    </location>
</feature>
<protein>
    <recommendedName>
        <fullName evidence="2">Small ribosomal subunit protein mS25</fullName>
    </recommendedName>
    <alternativeName>
        <fullName evidence="2">28S ribosomal protein S25, mitochondrial</fullName>
        <shortName>MRP-S25</shortName>
        <shortName>S25mt</shortName>
    </alternativeName>
</protein>
<gene>
    <name type="primary">mRpS25</name>
    <name type="ORF">CG14413</name>
</gene>
<evidence type="ECO:0000250" key="1">
    <source>
        <dbReference type="UniProtKB" id="P82669"/>
    </source>
</evidence>
<evidence type="ECO:0000305" key="2"/>
<accession>Q9VY28</accession>
<accession>A0JQ26</accession>
<accession>Q29QE8</accession>
<proteinExistence type="evidence at protein level"/>
<name>RT25_DROME</name>
<organism>
    <name type="scientific">Drosophila melanogaster</name>
    <name type="common">Fruit fly</name>
    <dbReference type="NCBI Taxonomy" id="7227"/>
    <lineage>
        <taxon>Eukaryota</taxon>
        <taxon>Metazoa</taxon>
        <taxon>Ecdysozoa</taxon>
        <taxon>Arthropoda</taxon>
        <taxon>Hexapoda</taxon>
        <taxon>Insecta</taxon>
        <taxon>Pterygota</taxon>
        <taxon>Neoptera</taxon>
        <taxon>Endopterygota</taxon>
        <taxon>Diptera</taxon>
        <taxon>Brachycera</taxon>
        <taxon>Muscomorpha</taxon>
        <taxon>Ephydroidea</taxon>
        <taxon>Drosophilidae</taxon>
        <taxon>Drosophila</taxon>
        <taxon>Sophophora</taxon>
    </lineage>
</organism>